<reference key="1">
    <citation type="journal article" date="2009" name="J. Bacteriol.">
        <title>Genomic sequencing reveals regulatory mutations and recombinational events in the widely used MC4100 lineage of Escherichia coli K-12.</title>
        <authorList>
            <person name="Ferenci T."/>
            <person name="Zhou Z."/>
            <person name="Betteridge T."/>
            <person name="Ren Y."/>
            <person name="Liu Y."/>
            <person name="Feng L."/>
            <person name="Reeves P.R."/>
            <person name="Wang L."/>
        </authorList>
    </citation>
    <scope>NUCLEOTIDE SEQUENCE [LARGE SCALE GENOMIC DNA]</scope>
    <source>
        <strain>K12 / MC4100 / BW2952</strain>
    </source>
</reference>
<evidence type="ECO:0000255" key="1">
    <source>
        <dbReference type="HAMAP-Rule" id="MF_01042"/>
    </source>
</evidence>
<organism>
    <name type="scientific">Escherichia coli (strain K12 / MC4100 / BW2952)</name>
    <dbReference type="NCBI Taxonomy" id="595496"/>
    <lineage>
        <taxon>Bacteria</taxon>
        <taxon>Pseudomonadati</taxon>
        <taxon>Pseudomonadota</taxon>
        <taxon>Gammaproteobacteria</taxon>
        <taxon>Enterobacterales</taxon>
        <taxon>Enterobacteriaceae</taxon>
        <taxon>Escherichia</taxon>
    </lineage>
</organism>
<sequence length="183" mass="21013">MKKKTTLSEEDQALFRQLMAGTRKIKQDTIVHRPQRKKISEVPVKRLIQEQADASHYFSDEFQPLLNTEGPVKYVRPDVSHFEAKKLRRGDYSPELFLDLHGLTQLQAKQELGALIAACRREHVFCACVMHGHGKHILKQQTPLWLAQHPHVMAFHQAPKEYGGDAALLVLIEVEEWLPPELP</sequence>
<gene>
    <name evidence="1" type="primary">smrB</name>
    <name type="ordered locus">BWG_2105</name>
</gene>
<name>SMRB_ECOBW</name>
<keyword id="KW-0255">Endonuclease</keyword>
<keyword id="KW-0378">Hydrolase</keyword>
<keyword id="KW-0540">Nuclease</keyword>
<keyword id="KW-0694">RNA-binding</keyword>
<keyword id="KW-0699">rRNA-binding</keyword>
<protein>
    <recommendedName>
        <fullName evidence="1">Ribosome rescue factor SmrB</fullName>
        <ecNumber evidence="1">3.1.-.-</ecNumber>
    </recommendedName>
</protein>
<feature type="chain" id="PRO_1000213401" description="Ribosome rescue factor SmrB">
    <location>
        <begin position="1"/>
        <end position="183"/>
    </location>
</feature>
<feature type="domain" description="Smr" evidence="1">
    <location>
        <begin position="98"/>
        <end position="173"/>
    </location>
</feature>
<proteinExistence type="inferred from homology"/>
<accession>C4ZVM4</accession>
<comment type="function">
    <text evidence="1">Acts as a ribosome collision sensor. Detects stalled/collided disomes (pairs of ribosomes where the leading ribosome is stalled and a second ribosome has collided with it) and endonucleolytically cleaves mRNA at the 5' boundary of the stalled ribosome. Stalled/collided disomes form a new interface (primarily via the 30S subunits) that binds SmrB. Cleaved mRNA becomes available for tmRNA ligation, leading to ribosomal subunit dissociation and rescue of stalled ribosomes.</text>
</comment>
<comment type="subunit">
    <text evidence="1">Associates with collided ribosomes, but not with correctly translating polysomes.</text>
</comment>
<comment type="similarity">
    <text evidence="1">Belongs to the SmrB family.</text>
</comment>
<dbReference type="EC" id="3.1.-.-" evidence="1"/>
<dbReference type="EMBL" id="CP001396">
    <property type="protein sequence ID" value="ACR62507.1"/>
    <property type="molecule type" value="Genomic_DNA"/>
</dbReference>
<dbReference type="RefSeq" id="WP_000730806.1">
    <property type="nucleotide sequence ID" value="NC_012759.1"/>
</dbReference>
<dbReference type="SMR" id="C4ZVM4"/>
<dbReference type="GeneID" id="93774844"/>
<dbReference type="KEGG" id="ebw:BWG_2105"/>
<dbReference type="HOGENOM" id="CLU_055978_4_0_6"/>
<dbReference type="GO" id="GO:0004521">
    <property type="term" value="F:RNA endonuclease activity"/>
    <property type="evidence" value="ECO:0007669"/>
    <property type="project" value="UniProtKB-UniRule"/>
</dbReference>
<dbReference type="GO" id="GO:0019843">
    <property type="term" value="F:rRNA binding"/>
    <property type="evidence" value="ECO:0007669"/>
    <property type="project" value="UniProtKB-UniRule"/>
</dbReference>
<dbReference type="GO" id="GO:0072344">
    <property type="term" value="P:rescue of stalled ribosome"/>
    <property type="evidence" value="ECO:0007669"/>
    <property type="project" value="UniProtKB-UniRule"/>
</dbReference>
<dbReference type="Gene3D" id="3.30.1370.110">
    <property type="match status" value="1"/>
</dbReference>
<dbReference type="HAMAP" id="MF_01042">
    <property type="entry name" value="SmrB"/>
    <property type="match status" value="1"/>
</dbReference>
<dbReference type="InterPro" id="IPR002625">
    <property type="entry name" value="Smr_dom"/>
</dbReference>
<dbReference type="InterPro" id="IPR036063">
    <property type="entry name" value="Smr_dom_sf"/>
</dbReference>
<dbReference type="InterPro" id="IPR022990">
    <property type="entry name" value="SmrB-like"/>
</dbReference>
<dbReference type="NCBIfam" id="NF003432">
    <property type="entry name" value="PRK04946.1"/>
    <property type="match status" value="1"/>
</dbReference>
<dbReference type="PANTHER" id="PTHR35562">
    <property type="entry name" value="DNA ENDONUCLEASE SMRA-RELATED"/>
    <property type="match status" value="1"/>
</dbReference>
<dbReference type="PANTHER" id="PTHR35562:SF1">
    <property type="entry name" value="UPF0115 PROTEIN YFCN"/>
    <property type="match status" value="1"/>
</dbReference>
<dbReference type="Pfam" id="PF01713">
    <property type="entry name" value="Smr"/>
    <property type="match status" value="1"/>
</dbReference>
<dbReference type="SMART" id="SM00463">
    <property type="entry name" value="SMR"/>
    <property type="match status" value="1"/>
</dbReference>
<dbReference type="SUPFAM" id="SSF160443">
    <property type="entry name" value="SMR domain-like"/>
    <property type="match status" value="1"/>
</dbReference>
<dbReference type="PROSITE" id="PS50828">
    <property type="entry name" value="SMR"/>
    <property type="match status" value="1"/>
</dbReference>